<feature type="chain" id="PRO_1000093097" description="S-adenosylmethionine synthase">
    <location>
        <begin position="1"/>
        <end position="395"/>
    </location>
</feature>
<feature type="region of interest" description="Flexible loop" evidence="1">
    <location>
        <begin position="98"/>
        <end position="108"/>
    </location>
</feature>
<feature type="binding site" description="in other chain" evidence="1">
    <location>
        <position position="14"/>
    </location>
    <ligand>
        <name>ATP</name>
        <dbReference type="ChEBI" id="CHEBI:30616"/>
        <note>ligand shared between two neighboring subunits</note>
    </ligand>
</feature>
<feature type="binding site" evidence="1">
    <location>
        <position position="16"/>
    </location>
    <ligand>
        <name>Mg(2+)</name>
        <dbReference type="ChEBI" id="CHEBI:18420"/>
    </ligand>
</feature>
<feature type="binding site" evidence="1">
    <location>
        <position position="42"/>
    </location>
    <ligand>
        <name>K(+)</name>
        <dbReference type="ChEBI" id="CHEBI:29103"/>
    </ligand>
</feature>
<feature type="binding site" description="in other chain" evidence="1">
    <location>
        <position position="55"/>
    </location>
    <ligand>
        <name>L-methionine</name>
        <dbReference type="ChEBI" id="CHEBI:57844"/>
        <note>ligand shared between two neighboring subunits</note>
    </ligand>
</feature>
<feature type="binding site" description="in other chain" evidence="1">
    <location>
        <position position="98"/>
    </location>
    <ligand>
        <name>L-methionine</name>
        <dbReference type="ChEBI" id="CHEBI:57844"/>
        <note>ligand shared between two neighboring subunits</note>
    </ligand>
</feature>
<feature type="binding site" description="in other chain" evidence="1">
    <location>
        <begin position="174"/>
        <end position="176"/>
    </location>
    <ligand>
        <name>ATP</name>
        <dbReference type="ChEBI" id="CHEBI:30616"/>
        <note>ligand shared between two neighboring subunits</note>
    </ligand>
</feature>
<feature type="binding site" description="in other chain" evidence="1">
    <location>
        <begin position="240"/>
        <end position="241"/>
    </location>
    <ligand>
        <name>ATP</name>
        <dbReference type="ChEBI" id="CHEBI:30616"/>
        <note>ligand shared between two neighboring subunits</note>
    </ligand>
</feature>
<feature type="binding site" evidence="1">
    <location>
        <position position="249"/>
    </location>
    <ligand>
        <name>ATP</name>
        <dbReference type="ChEBI" id="CHEBI:30616"/>
        <note>ligand shared between two neighboring subunits</note>
    </ligand>
</feature>
<feature type="binding site" evidence="1">
    <location>
        <position position="249"/>
    </location>
    <ligand>
        <name>L-methionine</name>
        <dbReference type="ChEBI" id="CHEBI:57844"/>
        <note>ligand shared between two neighboring subunits</note>
    </ligand>
</feature>
<feature type="binding site" description="in other chain" evidence="1">
    <location>
        <begin position="255"/>
        <end position="256"/>
    </location>
    <ligand>
        <name>ATP</name>
        <dbReference type="ChEBI" id="CHEBI:30616"/>
        <note>ligand shared between two neighboring subunits</note>
    </ligand>
</feature>
<feature type="binding site" evidence="1">
    <location>
        <position position="272"/>
    </location>
    <ligand>
        <name>ATP</name>
        <dbReference type="ChEBI" id="CHEBI:30616"/>
        <note>ligand shared between two neighboring subunits</note>
    </ligand>
</feature>
<feature type="binding site" evidence="1">
    <location>
        <position position="276"/>
    </location>
    <ligand>
        <name>ATP</name>
        <dbReference type="ChEBI" id="CHEBI:30616"/>
        <note>ligand shared between two neighboring subunits</note>
    </ligand>
</feature>
<feature type="binding site" description="in other chain" evidence="1">
    <location>
        <position position="280"/>
    </location>
    <ligand>
        <name>L-methionine</name>
        <dbReference type="ChEBI" id="CHEBI:57844"/>
        <note>ligand shared between two neighboring subunits</note>
    </ligand>
</feature>
<organism>
    <name type="scientific">Thermotoga sp. (strain RQ2)</name>
    <dbReference type="NCBI Taxonomy" id="126740"/>
    <lineage>
        <taxon>Bacteria</taxon>
        <taxon>Thermotogati</taxon>
        <taxon>Thermotogota</taxon>
        <taxon>Thermotogae</taxon>
        <taxon>Thermotogales</taxon>
        <taxon>Thermotogaceae</taxon>
        <taxon>Thermotoga</taxon>
    </lineage>
</organism>
<keyword id="KW-0067">ATP-binding</keyword>
<keyword id="KW-0963">Cytoplasm</keyword>
<keyword id="KW-0460">Magnesium</keyword>
<keyword id="KW-0479">Metal-binding</keyword>
<keyword id="KW-0547">Nucleotide-binding</keyword>
<keyword id="KW-0554">One-carbon metabolism</keyword>
<keyword id="KW-0630">Potassium</keyword>
<keyword id="KW-0808">Transferase</keyword>
<proteinExistence type="inferred from homology"/>
<protein>
    <recommendedName>
        <fullName evidence="1">S-adenosylmethionine synthase</fullName>
        <shortName evidence="1">AdoMet synthase</shortName>
        <ecNumber evidence="1">2.5.1.6</ecNumber>
    </recommendedName>
    <alternativeName>
        <fullName evidence="1">MAT</fullName>
    </alternativeName>
    <alternativeName>
        <fullName evidence="1">Methionine adenosyltransferase</fullName>
    </alternativeName>
</protein>
<gene>
    <name evidence="1" type="primary">metK</name>
    <name type="ordered locus">TRQ2_1171</name>
</gene>
<dbReference type="EC" id="2.5.1.6" evidence="1"/>
<dbReference type="EMBL" id="CP000969">
    <property type="protein sequence ID" value="ACB09515.1"/>
    <property type="molecule type" value="Genomic_DNA"/>
</dbReference>
<dbReference type="RefSeq" id="WP_004082170.1">
    <property type="nucleotide sequence ID" value="NC_010483.1"/>
</dbReference>
<dbReference type="SMR" id="B1LB17"/>
<dbReference type="KEGG" id="trq:TRQ2_1171"/>
<dbReference type="HOGENOM" id="CLU_041802_1_1_0"/>
<dbReference type="UniPathway" id="UPA00315">
    <property type="reaction ID" value="UER00080"/>
</dbReference>
<dbReference type="Proteomes" id="UP000001687">
    <property type="component" value="Chromosome"/>
</dbReference>
<dbReference type="GO" id="GO:0005737">
    <property type="term" value="C:cytoplasm"/>
    <property type="evidence" value="ECO:0007669"/>
    <property type="project" value="UniProtKB-SubCell"/>
</dbReference>
<dbReference type="GO" id="GO:0005524">
    <property type="term" value="F:ATP binding"/>
    <property type="evidence" value="ECO:0007669"/>
    <property type="project" value="UniProtKB-UniRule"/>
</dbReference>
<dbReference type="GO" id="GO:0000287">
    <property type="term" value="F:magnesium ion binding"/>
    <property type="evidence" value="ECO:0007669"/>
    <property type="project" value="UniProtKB-UniRule"/>
</dbReference>
<dbReference type="GO" id="GO:0004478">
    <property type="term" value="F:methionine adenosyltransferase activity"/>
    <property type="evidence" value="ECO:0007669"/>
    <property type="project" value="UniProtKB-UniRule"/>
</dbReference>
<dbReference type="GO" id="GO:0006730">
    <property type="term" value="P:one-carbon metabolic process"/>
    <property type="evidence" value="ECO:0007669"/>
    <property type="project" value="UniProtKB-KW"/>
</dbReference>
<dbReference type="GO" id="GO:0006556">
    <property type="term" value="P:S-adenosylmethionine biosynthetic process"/>
    <property type="evidence" value="ECO:0007669"/>
    <property type="project" value="UniProtKB-UniRule"/>
</dbReference>
<dbReference type="CDD" id="cd18079">
    <property type="entry name" value="S-AdoMet_synt"/>
    <property type="match status" value="1"/>
</dbReference>
<dbReference type="FunFam" id="3.30.300.10:FF:000003">
    <property type="entry name" value="S-adenosylmethionine synthase"/>
    <property type="match status" value="1"/>
</dbReference>
<dbReference type="FunFam" id="3.30.300.10:FF:000004">
    <property type="entry name" value="S-adenosylmethionine synthase"/>
    <property type="match status" value="1"/>
</dbReference>
<dbReference type="Gene3D" id="3.30.300.10">
    <property type="match status" value="3"/>
</dbReference>
<dbReference type="HAMAP" id="MF_00086">
    <property type="entry name" value="S_AdoMet_synth1"/>
    <property type="match status" value="1"/>
</dbReference>
<dbReference type="InterPro" id="IPR022631">
    <property type="entry name" value="ADOMET_SYNTHASE_CS"/>
</dbReference>
<dbReference type="InterPro" id="IPR022630">
    <property type="entry name" value="S-AdoMet_synt_C"/>
</dbReference>
<dbReference type="InterPro" id="IPR022629">
    <property type="entry name" value="S-AdoMet_synt_central"/>
</dbReference>
<dbReference type="InterPro" id="IPR022628">
    <property type="entry name" value="S-AdoMet_synt_N"/>
</dbReference>
<dbReference type="InterPro" id="IPR002133">
    <property type="entry name" value="S-AdoMet_synthetase"/>
</dbReference>
<dbReference type="InterPro" id="IPR022636">
    <property type="entry name" value="S-AdoMet_synthetase_sfam"/>
</dbReference>
<dbReference type="NCBIfam" id="TIGR01034">
    <property type="entry name" value="metK"/>
    <property type="match status" value="1"/>
</dbReference>
<dbReference type="PANTHER" id="PTHR11964">
    <property type="entry name" value="S-ADENOSYLMETHIONINE SYNTHETASE"/>
    <property type="match status" value="1"/>
</dbReference>
<dbReference type="Pfam" id="PF02773">
    <property type="entry name" value="S-AdoMet_synt_C"/>
    <property type="match status" value="1"/>
</dbReference>
<dbReference type="Pfam" id="PF02772">
    <property type="entry name" value="S-AdoMet_synt_M"/>
    <property type="match status" value="1"/>
</dbReference>
<dbReference type="Pfam" id="PF00438">
    <property type="entry name" value="S-AdoMet_synt_N"/>
    <property type="match status" value="1"/>
</dbReference>
<dbReference type="PIRSF" id="PIRSF000497">
    <property type="entry name" value="MAT"/>
    <property type="match status" value="1"/>
</dbReference>
<dbReference type="SUPFAM" id="SSF55973">
    <property type="entry name" value="S-adenosylmethionine synthetase"/>
    <property type="match status" value="3"/>
</dbReference>
<dbReference type="PROSITE" id="PS00376">
    <property type="entry name" value="ADOMET_SYNTHASE_1"/>
    <property type="match status" value="1"/>
</dbReference>
<dbReference type="PROSITE" id="PS00377">
    <property type="entry name" value="ADOMET_SYNTHASE_2"/>
    <property type="match status" value="1"/>
</dbReference>
<comment type="function">
    <text evidence="1">Catalyzes the formation of S-adenosylmethionine (AdoMet) from methionine and ATP. The overall synthetic reaction is composed of two sequential steps, AdoMet formation and the subsequent tripolyphosphate hydrolysis which occurs prior to release of AdoMet from the enzyme.</text>
</comment>
<comment type="catalytic activity">
    <reaction evidence="1">
        <text>L-methionine + ATP + H2O = S-adenosyl-L-methionine + phosphate + diphosphate</text>
        <dbReference type="Rhea" id="RHEA:21080"/>
        <dbReference type="ChEBI" id="CHEBI:15377"/>
        <dbReference type="ChEBI" id="CHEBI:30616"/>
        <dbReference type="ChEBI" id="CHEBI:33019"/>
        <dbReference type="ChEBI" id="CHEBI:43474"/>
        <dbReference type="ChEBI" id="CHEBI:57844"/>
        <dbReference type="ChEBI" id="CHEBI:59789"/>
        <dbReference type="EC" id="2.5.1.6"/>
    </reaction>
</comment>
<comment type="cofactor">
    <cofactor evidence="1">
        <name>Mg(2+)</name>
        <dbReference type="ChEBI" id="CHEBI:18420"/>
    </cofactor>
    <text evidence="1">Binds 2 divalent ions per subunit.</text>
</comment>
<comment type="cofactor">
    <cofactor evidence="1">
        <name>K(+)</name>
        <dbReference type="ChEBI" id="CHEBI:29103"/>
    </cofactor>
    <text evidence="1">Binds 1 potassium ion per subunit.</text>
</comment>
<comment type="pathway">
    <text evidence="1">Amino-acid biosynthesis; S-adenosyl-L-methionine biosynthesis; S-adenosyl-L-methionine from L-methionine: step 1/1.</text>
</comment>
<comment type="subunit">
    <text evidence="1">Homotetramer; dimer of dimers.</text>
</comment>
<comment type="subcellular location">
    <subcellularLocation>
        <location evidence="1">Cytoplasm</location>
    </subcellularLocation>
</comment>
<comment type="similarity">
    <text evidence="1">Belongs to the AdoMet synthase family.</text>
</comment>
<evidence type="ECO:0000255" key="1">
    <source>
        <dbReference type="HAMAP-Rule" id="MF_00086"/>
    </source>
</evidence>
<sequence length="395" mass="43673">MRRLFTSESVTEGHPDKIADQISDAILDAMLEQDPRSRVAVETLVTTGLVIIAGEVTTRAYVEIPDIARKTILEIGYTRAKYGFDGETCGVLTSIHSQSPDIALGVDKALEVKTGEEVADEFEALGAGDQGIMFGYATNETPEYMPLPITLAHKLAMRLAEVRKNGTLPFLRPDGKTQVTIEYEDDKPVRVDTVLISTQHDPDISQADLREAIIEHVINPVIPEQYRDDKMKILVNPTGRFVLGGPMADTGLTGRKIIVDTYGGWVPHGGGAFSGKDPTKVDRSAHYMARYVAKNVVAAGLADKFLIQLSYAIGVAKPVSIMIDTYGTAKVDEDKLLKVITELFDFRPGAIIKKLNLLRPIYRKTAAYGHFGRNEEEFTWEKLDMVDELKRAFNM</sequence>
<name>METK_THESQ</name>
<reference key="1">
    <citation type="journal article" date="2011" name="J. Bacteriol.">
        <title>Genome sequence of Thermotoga sp. strain RQ2, a hyperthermophilic bacterium isolated from a geothermally heated region of the seafloor near Ribeira Quente, the Azores.</title>
        <authorList>
            <person name="Swithers K.S."/>
            <person name="DiPippo J.L."/>
            <person name="Bruce D.C."/>
            <person name="Detter C."/>
            <person name="Tapia R."/>
            <person name="Han S."/>
            <person name="Saunders E."/>
            <person name="Goodwin L.A."/>
            <person name="Han J."/>
            <person name="Woyke T."/>
            <person name="Pitluck S."/>
            <person name="Pennacchio L."/>
            <person name="Nolan M."/>
            <person name="Mikhailova N."/>
            <person name="Lykidis A."/>
            <person name="Land M.L."/>
            <person name="Brettin T."/>
            <person name="Stetter K.O."/>
            <person name="Nelson K.E."/>
            <person name="Gogarten J.P."/>
            <person name="Noll K.M."/>
        </authorList>
    </citation>
    <scope>NUCLEOTIDE SEQUENCE [LARGE SCALE GENOMIC DNA]</scope>
    <source>
        <strain>RQ2</strain>
    </source>
</reference>
<accession>B1LB17</accession>